<keyword id="KW-0963">Cytoplasm</keyword>
<keyword id="KW-0342">GTP-binding</keyword>
<keyword id="KW-0436">Ligase</keyword>
<keyword id="KW-0460">Magnesium</keyword>
<keyword id="KW-0479">Metal-binding</keyword>
<keyword id="KW-0547">Nucleotide-binding</keyword>
<keyword id="KW-0658">Purine biosynthesis</keyword>
<gene>
    <name type="ORF">PC000072.01.0</name>
    <name evidence="2" type="ORF">PCHAS_1130600</name>
</gene>
<name>PURA_PLACU</name>
<comment type="function">
    <text evidence="1">Plays an important role in the salvage pathway for purine nucleotide biosynthesis. Catalyzes the first commited step in the biosynthesis of AMP from IMP.</text>
</comment>
<comment type="catalytic activity">
    <reaction evidence="1">
        <text>IMP + L-aspartate + GTP = N(6)-(1,2-dicarboxyethyl)-AMP + GDP + phosphate + 2 H(+)</text>
        <dbReference type="Rhea" id="RHEA:15753"/>
        <dbReference type="ChEBI" id="CHEBI:15378"/>
        <dbReference type="ChEBI" id="CHEBI:29991"/>
        <dbReference type="ChEBI" id="CHEBI:37565"/>
        <dbReference type="ChEBI" id="CHEBI:43474"/>
        <dbReference type="ChEBI" id="CHEBI:57567"/>
        <dbReference type="ChEBI" id="CHEBI:58053"/>
        <dbReference type="ChEBI" id="CHEBI:58189"/>
        <dbReference type="EC" id="6.3.4.4"/>
    </reaction>
</comment>
<comment type="cofactor">
    <cofactor evidence="1">
        <name>Mg(2+)</name>
        <dbReference type="ChEBI" id="CHEBI:18420"/>
    </cofactor>
    <text evidence="1">Binds 1 Mg(2+) ion per subunit.</text>
</comment>
<comment type="pathway">
    <text evidence="1">Purine metabolism; AMP biosynthesis via de novo pathway; AMP from IMP: step 1/2.</text>
</comment>
<comment type="subunit">
    <text evidence="1">Homodimer.</text>
</comment>
<comment type="subcellular location">
    <subcellularLocation>
        <location evidence="1">Cytoplasm</location>
    </subcellularLocation>
</comment>
<comment type="miscellaneous">
    <text evidence="1">Parasitic protozoa lack the de novo purine biosynthesis pathway and rely exclusively on the salvage pathway for their purine nucleotide requirements.</text>
</comment>
<comment type="similarity">
    <text evidence="1">Belongs to the adenylosuccinate synthetase family.</text>
</comment>
<protein>
    <recommendedName>
        <fullName evidence="1">Adenylosuccinate synthetase</fullName>
        <shortName evidence="1">AMPSase</shortName>
        <shortName evidence="1">AdSS</shortName>
        <ecNumber evidence="1">6.3.4.4</ecNumber>
    </recommendedName>
    <alternativeName>
        <fullName evidence="1">IMP--aspartate ligase</fullName>
    </alternativeName>
</protein>
<dbReference type="EC" id="6.3.4.4" evidence="1"/>
<dbReference type="EMBL" id="LK022888">
    <property type="protein sequence ID" value="VTZ69301.1"/>
    <property type="molecule type" value="Genomic_DNA"/>
</dbReference>
<dbReference type="EMBL" id="LT608177">
    <property type="protein sequence ID" value="SCM23887.1"/>
    <property type="molecule type" value="Genomic_DNA"/>
</dbReference>
<dbReference type="EMBL" id="LT608163">
    <property type="protein sequence ID" value="SCN61364.1"/>
    <property type="molecule type" value="Genomic_DNA"/>
</dbReference>
<dbReference type="RefSeq" id="XP_016654034.1">
    <property type="nucleotide sequence ID" value="XM_016798654.1"/>
</dbReference>
<dbReference type="SMR" id="Q4X2S8"/>
<dbReference type="EnsemblProtists" id="CDR14104">
    <property type="protein sequence ID" value="CDR14104"/>
    <property type="gene ID" value="PCHAS_113060"/>
</dbReference>
<dbReference type="GeneID" id="3495989"/>
<dbReference type="KEGG" id="pcb:PCHAS_1130600"/>
<dbReference type="VEuPathDB" id="PlasmoDB:PCHAS_1130600"/>
<dbReference type="eggNOG" id="KOG1355">
    <property type="taxonomic scope" value="Eukaryota"/>
</dbReference>
<dbReference type="OrthoDB" id="10265645at2759"/>
<dbReference type="UniPathway" id="UPA00075">
    <property type="reaction ID" value="UER00335"/>
</dbReference>
<dbReference type="Proteomes" id="UP000071118">
    <property type="component" value="Chromosome 11"/>
</dbReference>
<dbReference type="Proteomes" id="UP000195489">
    <property type="component" value="Chromosome 11"/>
</dbReference>
<dbReference type="Proteomes" id="UP000507163">
    <property type="component" value="Chromosome 11"/>
</dbReference>
<dbReference type="GO" id="GO:0005737">
    <property type="term" value="C:cytoplasm"/>
    <property type="evidence" value="ECO:0007669"/>
    <property type="project" value="UniProtKB-SubCell"/>
</dbReference>
<dbReference type="GO" id="GO:0004019">
    <property type="term" value="F:adenylosuccinate synthase activity"/>
    <property type="evidence" value="ECO:0007669"/>
    <property type="project" value="UniProtKB-UniRule"/>
</dbReference>
<dbReference type="GO" id="GO:0005525">
    <property type="term" value="F:GTP binding"/>
    <property type="evidence" value="ECO:0007669"/>
    <property type="project" value="UniProtKB-UniRule"/>
</dbReference>
<dbReference type="GO" id="GO:0000287">
    <property type="term" value="F:magnesium ion binding"/>
    <property type="evidence" value="ECO:0007669"/>
    <property type="project" value="UniProtKB-UniRule"/>
</dbReference>
<dbReference type="GO" id="GO:0044208">
    <property type="term" value="P:'de novo' AMP biosynthetic process"/>
    <property type="evidence" value="ECO:0007669"/>
    <property type="project" value="UniProtKB-UniRule"/>
</dbReference>
<dbReference type="GO" id="GO:0046040">
    <property type="term" value="P:IMP metabolic process"/>
    <property type="evidence" value="ECO:0007669"/>
    <property type="project" value="TreeGrafter"/>
</dbReference>
<dbReference type="CDD" id="cd03108">
    <property type="entry name" value="AdSS"/>
    <property type="match status" value="1"/>
</dbReference>
<dbReference type="FunFam" id="1.10.300.10:FF:000001">
    <property type="entry name" value="Adenylosuccinate synthetase"/>
    <property type="match status" value="1"/>
</dbReference>
<dbReference type="FunFam" id="3.90.170.10:FF:000001">
    <property type="entry name" value="Adenylosuccinate synthetase"/>
    <property type="match status" value="1"/>
</dbReference>
<dbReference type="Gene3D" id="3.40.440.10">
    <property type="entry name" value="Adenylosuccinate Synthetase, subunit A, domain 1"/>
    <property type="match status" value="1"/>
</dbReference>
<dbReference type="Gene3D" id="1.10.300.10">
    <property type="entry name" value="Adenylosuccinate Synthetase, subunit A, domain 2"/>
    <property type="match status" value="1"/>
</dbReference>
<dbReference type="Gene3D" id="3.90.170.10">
    <property type="entry name" value="Adenylosuccinate Synthetase, subunit A, domain 3"/>
    <property type="match status" value="1"/>
</dbReference>
<dbReference type="HAMAP" id="MF_00011">
    <property type="entry name" value="Adenylosucc_synth"/>
    <property type="match status" value="1"/>
</dbReference>
<dbReference type="InterPro" id="IPR018220">
    <property type="entry name" value="Adenylosuccin_syn_GTP-bd"/>
</dbReference>
<dbReference type="InterPro" id="IPR033128">
    <property type="entry name" value="Adenylosuccin_syn_Lys_AS"/>
</dbReference>
<dbReference type="InterPro" id="IPR042109">
    <property type="entry name" value="Adenylosuccinate_synth_dom1"/>
</dbReference>
<dbReference type="InterPro" id="IPR042110">
    <property type="entry name" value="Adenylosuccinate_synth_dom2"/>
</dbReference>
<dbReference type="InterPro" id="IPR042111">
    <property type="entry name" value="Adenylosuccinate_synth_dom3"/>
</dbReference>
<dbReference type="InterPro" id="IPR001114">
    <property type="entry name" value="Adenylosuccinate_synthetase"/>
</dbReference>
<dbReference type="InterPro" id="IPR027417">
    <property type="entry name" value="P-loop_NTPase"/>
</dbReference>
<dbReference type="NCBIfam" id="NF002223">
    <property type="entry name" value="PRK01117.1"/>
    <property type="match status" value="1"/>
</dbReference>
<dbReference type="NCBIfam" id="TIGR00184">
    <property type="entry name" value="purA"/>
    <property type="match status" value="1"/>
</dbReference>
<dbReference type="PANTHER" id="PTHR11846">
    <property type="entry name" value="ADENYLOSUCCINATE SYNTHETASE"/>
    <property type="match status" value="1"/>
</dbReference>
<dbReference type="PANTHER" id="PTHR11846:SF0">
    <property type="entry name" value="ADENYLOSUCCINATE SYNTHETASE"/>
    <property type="match status" value="1"/>
</dbReference>
<dbReference type="Pfam" id="PF00709">
    <property type="entry name" value="Adenylsucc_synt"/>
    <property type="match status" value="1"/>
</dbReference>
<dbReference type="SMART" id="SM00788">
    <property type="entry name" value="Adenylsucc_synt"/>
    <property type="match status" value="1"/>
</dbReference>
<dbReference type="SUPFAM" id="SSF52540">
    <property type="entry name" value="P-loop containing nucleoside triphosphate hydrolases"/>
    <property type="match status" value="1"/>
</dbReference>
<dbReference type="PROSITE" id="PS01266">
    <property type="entry name" value="ADENYLOSUCCIN_SYN_1"/>
    <property type="match status" value="1"/>
</dbReference>
<dbReference type="PROSITE" id="PS00513">
    <property type="entry name" value="ADENYLOSUCCIN_SYN_2"/>
    <property type="match status" value="1"/>
</dbReference>
<proteinExistence type="inferred from homology"/>
<feature type="chain" id="PRO_0000399292" description="Adenylosuccinate synthetase">
    <location>
        <begin position="1"/>
        <end position="439"/>
    </location>
</feature>
<feature type="active site" description="Proton acceptor" evidence="1">
    <location>
        <position position="26"/>
    </location>
</feature>
<feature type="active site" description="Proton donor" evidence="1">
    <location>
        <position position="54"/>
    </location>
</feature>
<feature type="binding site" evidence="1">
    <location>
        <begin position="25"/>
        <end position="31"/>
    </location>
    <ligand>
        <name>GTP</name>
        <dbReference type="ChEBI" id="CHEBI:37565"/>
    </ligand>
</feature>
<feature type="binding site" description="in other chain" evidence="1">
    <location>
        <begin position="26"/>
        <end position="29"/>
    </location>
    <ligand>
        <name>IMP</name>
        <dbReference type="ChEBI" id="CHEBI:58053"/>
        <note>ligand shared between dimeric partners</note>
    </ligand>
</feature>
<feature type="binding site" evidence="1">
    <location>
        <position position="26"/>
    </location>
    <ligand>
        <name>Mg(2+)</name>
        <dbReference type="ChEBI" id="CHEBI:18420"/>
    </ligand>
</feature>
<feature type="binding site" description="in other chain" evidence="1">
    <location>
        <begin position="51"/>
        <end position="54"/>
    </location>
    <ligand>
        <name>IMP</name>
        <dbReference type="ChEBI" id="CHEBI:58053"/>
        <note>ligand shared between dimeric partners</note>
    </ligand>
</feature>
<feature type="binding site" evidence="1">
    <location>
        <begin position="53"/>
        <end position="55"/>
    </location>
    <ligand>
        <name>GTP</name>
        <dbReference type="ChEBI" id="CHEBI:37565"/>
    </ligand>
</feature>
<feature type="binding site" evidence="1">
    <location>
        <position position="53"/>
    </location>
    <ligand>
        <name>Mg(2+)</name>
        <dbReference type="ChEBI" id="CHEBI:18420"/>
    </ligand>
</feature>
<feature type="binding site" evidence="1">
    <location>
        <position position="62"/>
    </location>
    <ligand>
        <name>GTP</name>
        <dbReference type="ChEBI" id="CHEBI:37565"/>
    </ligand>
</feature>
<feature type="binding site" description="in other chain" evidence="1">
    <location>
        <position position="141"/>
    </location>
    <ligand>
        <name>IMP</name>
        <dbReference type="ChEBI" id="CHEBI:58053"/>
        <note>ligand shared between dimeric partners</note>
    </ligand>
</feature>
<feature type="binding site" evidence="1">
    <location>
        <position position="155"/>
    </location>
    <ligand>
        <name>IMP</name>
        <dbReference type="ChEBI" id="CHEBI:58053"/>
        <note>ligand shared between dimeric partners</note>
    </ligand>
</feature>
<feature type="binding site" description="in other chain" evidence="1">
    <location>
        <position position="232"/>
    </location>
    <ligand>
        <name>IMP</name>
        <dbReference type="ChEBI" id="CHEBI:58053"/>
        <note>ligand shared between dimeric partners</note>
    </ligand>
</feature>
<feature type="binding site" description="in other chain" evidence="1">
    <location>
        <position position="247"/>
    </location>
    <ligand>
        <name>IMP</name>
        <dbReference type="ChEBI" id="CHEBI:58053"/>
        <note>ligand shared between dimeric partners</note>
    </ligand>
</feature>
<feature type="binding site" evidence="1">
    <location>
        <begin position="307"/>
        <end position="313"/>
    </location>
    <ligand>
        <name>substrate</name>
    </ligand>
</feature>
<feature type="binding site" evidence="1">
    <location>
        <position position="307"/>
    </location>
    <ligand>
        <name>GTP</name>
        <dbReference type="ChEBI" id="CHEBI:37565"/>
    </ligand>
</feature>
<feature type="binding site" description="in other chain" evidence="1">
    <location>
        <position position="311"/>
    </location>
    <ligand>
        <name>IMP</name>
        <dbReference type="ChEBI" id="CHEBI:58053"/>
        <note>ligand shared between dimeric partners</note>
    </ligand>
</feature>
<feature type="binding site" evidence="1">
    <location>
        <position position="313"/>
    </location>
    <ligand>
        <name>GTP</name>
        <dbReference type="ChEBI" id="CHEBI:37565"/>
    </ligand>
</feature>
<feature type="binding site" evidence="1">
    <location>
        <begin position="339"/>
        <end position="341"/>
    </location>
    <ligand>
        <name>GTP</name>
        <dbReference type="ChEBI" id="CHEBI:37565"/>
    </ligand>
</feature>
<feature type="binding site" evidence="1">
    <location>
        <begin position="425"/>
        <end position="427"/>
    </location>
    <ligand>
        <name>GTP</name>
        <dbReference type="ChEBI" id="CHEBI:37565"/>
    </ligand>
</feature>
<accession>Q4X2S8</accession>
<accession>A0A077TNC4</accession>
<reference evidence="3" key="1">
    <citation type="journal article" date="2014" name="BMC Biol.">
        <title>A comprehensive evaluation of rodent malaria parasite genomes and gene expression.</title>
        <authorList>
            <person name="Otto T.D."/>
            <person name="Bohme U."/>
            <person name="Jackson A.P."/>
            <person name="Hunt M."/>
            <person name="Franke-Fayard B."/>
            <person name="Hoeijmakers W.A."/>
            <person name="Religa A.A."/>
            <person name="Robertson L."/>
            <person name="Sanders M."/>
            <person name="Ogun S.A."/>
            <person name="Cunningham D."/>
            <person name="Erhart A."/>
            <person name="Billker O."/>
            <person name="Khan S.M."/>
            <person name="Stunnenberg H.G."/>
            <person name="Langhorne J."/>
            <person name="Holder A.A."/>
            <person name="Waters A.P."/>
            <person name="Newbold C.I."/>
            <person name="Pain A."/>
            <person name="Berriman M."/>
            <person name="Janse C.J."/>
        </authorList>
    </citation>
    <scope>NUCLEOTIDE SEQUENCE [LARGE SCALE GENOMIC DNA]</scope>
    <source>
        <strain evidence="3">AS</strain>
    </source>
</reference>
<reference evidence="4" key="2">
    <citation type="submission" date="2016-08" db="EMBL/GenBank/DDBJ databases">
        <authorList>
            <consortium name="Pathogen Informatics"/>
        </authorList>
    </citation>
    <scope>NUCLEOTIDE SEQUENCE [LARGE SCALE GENOMIC DNA]</scope>
    <source>
        <strain>AJ</strain>
        <strain evidence="2">AS</strain>
        <strain evidence="4">CB</strain>
    </source>
</reference>
<sequence>MNIFEHNIKNVDKGNVVAIVGTQWGDEGKGKIIDMLSKYSNITCRFNGGGNAGHTICVGNKKHALHLLPCGVLYENNVNVLGNCMVIHLKTLMKEINNLGNNILDRIYISEKAHILFDIHQEIDAMQETRKSKDGNAIGTTKKGIGPCYSTKASRIGIRMGSLRNFENFKKLYTKLIDNLMELYNIKDYNKEEELNEFYTYHQILKDKIINIMLYINKSIDAKKYILIEGANAAMLDIDLGTYPFVTSSSTTIGGVFSGLGIHHKKLNLVVGVVKSYLTRVGSGPFLTEQCNEIGDYLTKKGFEYGTTTNRPRRCGWLDLPMLYYVKYINCIDIINLTKLDVLSGLKEIYICIDYKNKTTGELLEKGSYPLEEEQLREYEPVYEKFEGWDEDITNCLEFDQLPEKAKKYVLAIESYIKTPIVWIGVGPTRDHTITRKFD</sequence>
<evidence type="ECO:0000255" key="1">
    <source>
        <dbReference type="HAMAP-Rule" id="MF_03125"/>
    </source>
</evidence>
<evidence type="ECO:0000312" key="2">
    <source>
        <dbReference type="EMBL" id="VTZ69301.1"/>
    </source>
</evidence>
<evidence type="ECO:0000312" key="3">
    <source>
        <dbReference type="Proteomes" id="UP000071118"/>
    </source>
</evidence>
<evidence type="ECO:0000312" key="4">
    <source>
        <dbReference type="Proteomes" id="UP000195489"/>
    </source>
</evidence>
<organism evidence="3">
    <name type="scientific">Plasmodium chabaudi chabaudi</name>
    <dbReference type="NCBI Taxonomy" id="31271"/>
    <lineage>
        <taxon>Eukaryota</taxon>
        <taxon>Sar</taxon>
        <taxon>Alveolata</taxon>
        <taxon>Apicomplexa</taxon>
        <taxon>Aconoidasida</taxon>
        <taxon>Haemosporida</taxon>
        <taxon>Plasmodiidae</taxon>
        <taxon>Plasmodium</taxon>
        <taxon>Plasmodium (Vinckeia)</taxon>
    </lineage>
</organism>